<protein>
    <recommendedName>
        <fullName evidence="1">Mycothiol acetyltransferase</fullName>
        <shortName evidence="1">MSH acetyltransferase</shortName>
        <ecNumber evidence="1">2.3.1.189</ecNumber>
    </recommendedName>
    <alternativeName>
        <fullName evidence="1">Mycothiol synthase</fullName>
    </alternativeName>
</protein>
<organism>
    <name type="scientific">Mycolicibacterium gilvum (strain PYR-GCK)</name>
    <name type="common">Mycobacterium gilvum (strain PYR-GCK)</name>
    <dbReference type="NCBI Taxonomy" id="350054"/>
    <lineage>
        <taxon>Bacteria</taxon>
        <taxon>Bacillati</taxon>
        <taxon>Actinomycetota</taxon>
        <taxon>Actinomycetes</taxon>
        <taxon>Mycobacteriales</taxon>
        <taxon>Mycobacteriaceae</taxon>
        <taxon>Mycolicibacterium</taxon>
    </lineage>
</organism>
<evidence type="ECO:0000255" key="1">
    <source>
        <dbReference type="HAMAP-Rule" id="MF_01698"/>
    </source>
</evidence>
<proteinExistence type="inferred from homology"/>
<reference key="1">
    <citation type="submission" date="2007-04" db="EMBL/GenBank/DDBJ databases">
        <title>Complete sequence of chromosome of Mycobacterium gilvum PYR-GCK.</title>
        <authorList>
            <consortium name="US DOE Joint Genome Institute"/>
            <person name="Copeland A."/>
            <person name="Lucas S."/>
            <person name="Lapidus A."/>
            <person name="Barry K."/>
            <person name="Detter J.C."/>
            <person name="Glavina del Rio T."/>
            <person name="Hammon N."/>
            <person name="Israni S."/>
            <person name="Dalin E."/>
            <person name="Tice H."/>
            <person name="Pitluck S."/>
            <person name="Chain P."/>
            <person name="Malfatti S."/>
            <person name="Shin M."/>
            <person name="Vergez L."/>
            <person name="Schmutz J."/>
            <person name="Larimer F."/>
            <person name="Land M."/>
            <person name="Hauser L."/>
            <person name="Kyrpides N."/>
            <person name="Mikhailova N."/>
            <person name="Miller C."/>
            <person name="Richardson P."/>
        </authorList>
    </citation>
    <scope>NUCLEOTIDE SEQUENCE [LARGE SCALE GENOMIC DNA]</scope>
    <source>
        <strain>PYR-GCK</strain>
    </source>
</reference>
<accession>A4T7H0</accession>
<name>MSHD_MYCGI</name>
<feature type="chain" id="PRO_0000400271" description="Mycothiol acetyltransferase">
    <location>
        <begin position="1"/>
        <end position="303"/>
    </location>
</feature>
<feature type="domain" description="N-acetyltransferase" evidence="1">
    <location>
        <begin position="150"/>
        <end position="303"/>
    </location>
</feature>
<feature type="binding site" evidence="1">
    <location>
        <position position="33"/>
    </location>
    <ligand>
        <name>1D-myo-inositol 2-(L-cysteinylamino)-2-deoxy-alpha-D-glucopyranoside</name>
        <dbReference type="ChEBI" id="CHEBI:58887"/>
    </ligand>
</feature>
<feature type="binding site" evidence="1">
    <location>
        <begin position="78"/>
        <end position="80"/>
    </location>
    <ligand>
        <name>acetyl-CoA</name>
        <dbReference type="ChEBI" id="CHEBI:57288"/>
        <label>1</label>
    </ligand>
</feature>
<feature type="binding site" evidence="1">
    <location>
        <begin position="86"/>
        <end position="91"/>
    </location>
    <ligand>
        <name>acetyl-CoA</name>
        <dbReference type="ChEBI" id="CHEBI:57288"/>
        <label>1</label>
    </ligand>
</feature>
<feature type="binding site" evidence="1">
    <location>
        <position position="177"/>
    </location>
    <ligand>
        <name>1D-myo-inositol 2-(L-cysteinylamino)-2-deoxy-alpha-D-glucopyranoside</name>
        <dbReference type="ChEBI" id="CHEBI:58887"/>
    </ligand>
</feature>
<feature type="binding site" evidence="1">
    <location>
        <position position="218"/>
    </location>
    <ligand>
        <name>1D-myo-inositol 2-(L-cysteinylamino)-2-deoxy-alpha-D-glucopyranoside</name>
        <dbReference type="ChEBI" id="CHEBI:58887"/>
    </ligand>
</feature>
<feature type="binding site" evidence="1">
    <location>
        <position position="226"/>
    </location>
    <ligand>
        <name>1D-myo-inositol 2-(L-cysteinylamino)-2-deoxy-alpha-D-glucopyranoside</name>
        <dbReference type="ChEBI" id="CHEBI:58887"/>
    </ligand>
</feature>
<feature type="binding site" evidence="1">
    <location>
        <begin position="230"/>
        <end position="232"/>
    </location>
    <ligand>
        <name>acetyl-CoA</name>
        <dbReference type="ChEBI" id="CHEBI:57288"/>
        <label>2</label>
    </ligand>
</feature>
<feature type="binding site" evidence="1">
    <location>
        <position position="269"/>
    </location>
    <ligand>
        <name>1D-myo-inositol 2-(L-cysteinylamino)-2-deoxy-alpha-D-glucopyranoside</name>
        <dbReference type="ChEBI" id="CHEBI:58887"/>
    </ligand>
</feature>
<feature type="binding site" evidence="1">
    <location>
        <begin position="274"/>
        <end position="279"/>
    </location>
    <ligand>
        <name>acetyl-CoA</name>
        <dbReference type="ChEBI" id="CHEBI:57288"/>
        <label>2</label>
    </ligand>
</feature>
<comment type="function">
    <text evidence="1">Catalyzes the transfer of acetyl from acetyl-CoA to desacetylmycothiol (Cys-GlcN-Ins) to form mycothiol.</text>
</comment>
<comment type="catalytic activity">
    <reaction evidence="1">
        <text>1D-myo-inositol 2-(L-cysteinylamino)-2-deoxy-alpha-D-glucopyranoside + acetyl-CoA = mycothiol + CoA + H(+)</text>
        <dbReference type="Rhea" id="RHEA:26172"/>
        <dbReference type="ChEBI" id="CHEBI:15378"/>
        <dbReference type="ChEBI" id="CHEBI:16768"/>
        <dbReference type="ChEBI" id="CHEBI:57287"/>
        <dbReference type="ChEBI" id="CHEBI:57288"/>
        <dbReference type="ChEBI" id="CHEBI:58887"/>
        <dbReference type="EC" id="2.3.1.189"/>
    </reaction>
</comment>
<comment type="subunit">
    <text evidence="1">Monomer.</text>
</comment>
<comment type="similarity">
    <text evidence="1">Belongs to the acetyltransferase family. MshD subfamily.</text>
</comment>
<gene>
    <name evidence="1" type="primary">mshD</name>
    <name type="ordered locus">Mflv_1651</name>
</gene>
<keyword id="KW-0012">Acyltransferase</keyword>
<keyword id="KW-0677">Repeat</keyword>
<keyword id="KW-0808">Transferase</keyword>
<dbReference type="EC" id="2.3.1.189" evidence="1"/>
<dbReference type="EMBL" id="CP000656">
    <property type="protein sequence ID" value="ABP44133.1"/>
    <property type="molecule type" value="Genomic_DNA"/>
</dbReference>
<dbReference type="SMR" id="A4T7H0"/>
<dbReference type="STRING" id="350054.Mflv_1651"/>
<dbReference type="KEGG" id="mgi:Mflv_1651"/>
<dbReference type="eggNOG" id="COG0456">
    <property type="taxonomic scope" value="Bacteria"/>
</dbReference>
<dbReference type="HOGENOM" id="CLU_068014_0_0_11"/>
<dbReference type="GO" id="GO:0035447">
    <property type="term" value="F:mycothiol synthase activity"/>
    <property type="evidence" value="ECO:0007669"/>
    <property type="project" value="UniProtKB-UniRule"/>
</dbReference>
<dbReference type="GO" id="GO:0008999">
    <property type="term" value="F:protein-N-terminal-alanine acetyltransferase activity"/>
    <property type="evidence" value="ECO:0007669"/>
    <property type="project" value="TreeGrafter"/>
</dbReference>
<dbReference type="GO" id="GO:0010125">
    <property type="term" value="P:mycothiol biosynthetic process"/>
    <property type="evidence" value="ECO:0007669"/>
    <property type="project" value="UniProtKB-UniRule"/>
</dbReference>
<dbReference type="CDD" id="cd04301">
    <property type="entry name" value="NAT_SF"/>
    <property type="match status" value="1"/>
</dbReference>
<dbReference type="Gene3D" id="3.40.630.30">
    <property type="match status" value="1"/>
</dbReference>
<dbReference type="HAMAP" id="MF_01698">
    <property type="entry name" value="MshD"/>
    <property type="match status" value="1"/>
</dbReference>
<dbReference type="InterPro" id="IPR016181">
    <property type="entry name" value="Acyl_CoA_acyltransferase"/>
</dbReference>
<dbReference type="InterPro" id="IPR000182">
    <property type="entry name" value="GNAT_dom"/>
</dbReference>
<dbReference type="InterPro" id="IPR050276">
    <property type="entry name" value="MshD_Acetyltransferase"/>
</dbReference>
<dbReference type="InterPro" id="IPR017813">
    <property type="entry name" value="Mycothiol_AcTrfase"/>
</dbReference>
<dbReference type="NCBIfam" id="TIGR03448">
    <property type="entry name" value="mycothiol_MshD"/>
    <property type="match status" value="1"/>
</dbReference>
<dbReference type="PANTHER" id="PTHR43617">
    <property type="entry name" value="L-AMINO ACID N-ACETYLTRANSFERASE"/>
    <property type="match status" value="1"/>
</dbReference>
<dbReference type="PANTHER" id="PTHR43617:SF31">
    <property type="entry name" value="MYCOTHIOL ACETYLTRANSFERASE"/>
    <property type="match status" value="1"/>
</dbReference>
<dbReference type="Pfam" id="PF00583">
    <property type="entry name" value="Acetyltransf_1"/>
    <property type="match status" value="1"/>
</dbReference>
<dbReference type="Pfam" id="PF13508">
    <property type="entry name" value="Acetyltransf_7"/>
    <property type="match status" value="1"/>
</dbReference>
<dbReference type="PIRSF" id="PIRSF021524">
    <property type="entry name" value="MSH_acetyltransferase"/>
    <property type="match status" value="1"/>
</dbReference>
<dbReference type="SUPFAM" id="SSF55729">
    <property type="entry name" value="Acyl-CoA N-acyltransferases (Nat)"/>
    <property type="match status" value="1"/>
</dbReference>
<dbReference type="PROSITE" id="PS51186">
    <property type="entry name" value="GNAT"/>
    <property type="match status" value="1"/>
</dbReference>
<sequence length="303" mass="32526">MSWQQSLTDDRARQIRELVSAASAADGVAPVGDQVLRALAHDRTRHLVAVEDDGAGSRVRGYLNLAPADDDAPPMAEVVVHPDARRRGTGSAMIRAALAEGGPQTRVWAHGNLVAARATAEALGLTAVRELLQMQRPLADLPPQTTAQRVRFATYSGPHDDAEVLRVNNAAFSWHPEQGGWTDADIAERRGEPWFDPAGFFLAFDEDTGALLGFHWTKVHSESLGEVYVVGVDPAAQGRGLGAALTLLGLHHLESRLTGDGRVADVMLYVEADNTAAVKTYRRLGFDIVNTDVAYAAVAPTDV</sequence>